<accession>Q8MI73</accession>
<protein>
    <recommendedName>
        <fullName>Somatotropin</fullName>
    </recommendedName>
    <alternativeName>
        <fullName>Growth hormone</fullName>
    </alternativeName>
</protein>
<gene>
    <name type="primary">GH1</name>
    <name type="synonym">GH</name>
</gene>
<keyword id="KW-1015">Disulfide bond</keyword>
<keyword id="KW-0372">Hormone</keyword>
<keyword id="KW-0479">Metal-binding</keyword>
<keyword id="KW-0597">Phosphoprotein</keyword>
<keyword id="KW-0964">Secreted</keyword>
<keyword id="KW-0732">Signal</keyword>
<keyword id="KW-0862">Zinc</keyword>
<organism>
    <name type="scientific">Delphinus delphis</name>
    <name type="common">Short-beaked common dolphin</name>
    <dbReference type="NCBI Taxonomy" id="9728"/>
    <lineage>
        <taxon>Eukaryota</taxon>
        <taxon>Metazoa</taxon>
        <taxon>Chordata</taxon>
        <taxon>Craniata</taxon>
        <taxon>Vertebrata</taxon>
        <taxon>Euteleostomi</taxon>
        <taxon>Mammalia</taxon>
        <taxon>Eutheria</taxon>
        <taxon>Laurasiatheria</taxon>
        <taxon>Artiodactyla</taxon>
        <taxon>Whippomorpha</taxon>
        <taxon>Cetacea</taxon>
        <taxon>Odontoceti</taxon>
        <taxon>Delphinidae</taxon>
        <taxon>Delphinus</taxon>
    </lineage>
</organism>
<comment type="function">
    <text evidence="1">Plays an important role in growth control. Its major role in stimulating body growth is to stimulate the liver and other tissues to secrete IGF1. It stimulates both the differentiation and proliferation of myoblasts. It also stimulates amino acid uptake and protein synthesis in muscle and other tissues (By similarity).</text>
</comment>
<comment type="subcellular location">
    <subcellularLocation>
        <location>Secreted</location>
    </subcellularLocation>
</comment>
<comment type="similarity">
    <text evidence="3">Belongs to the somatotropin/prolactin family.</text>
</comment>
<proteinExistence type="inferred from homology"/>
<sequence length="216" mass="24509">MAAGPRTSMLLAFALLCLPWTQEVGAFPAMPLSSLFANAVLRAQHLHQLAADTYKEFERAYIPEGQRYSIQNTQAAFCFSETIPAPTGKDEAQQRSDVELLRFSLLLIQSWLGPVQFLSRVFTNSLVFGTSDRVYEKLKDLEEGIQALMRELEDGSPRAGQILKQTYDKFDTNMRSDDALLKNYGLLSCFKKDLHKAETYLRVMKCRRFVESSCAF</sequence>
<reference key="1">
    <citation type="journal article" date="2002" name="Gen. Comp. Endocrinol.">
        <title>Cloning and characterisation of the GH gene from the common dolphin (Delphinus delphis).</title>
        <authorList>
            <person name="Maniou Z."/>
            <person name="Wallis O.C."/>
            <person name="Wallis M."/>
        </authorList>
    </citation>
    <scope>NUCLEOTIDE SEQUENCE [GENOMIC DNA]</scope>
    <source>
        <tissue>Liver</tissue>
    </source>
</reference>
<dbReference type="EMBL" id="AJ492191">
    <property type="protein sequence ID" value="CAD37292.1"/>
    <property type="molecule type" value="Genomic_DNA"/>
</dbReference>
<dbReference type="SMR" id="Q8MI73"/>
<dbReference type="GO" id="GO:0005615">
    <property type="term" value="C:extracellular space"/>
    <property type="evidence" value="ECO:0007669"/>
    <property type="project" value="InterPro"/>
</dbReference>
<dbReference type="GO" id="GO:0008083">
    <property type="term" value="F:growth factor activity"/>
    <property type="evidence" value="ECO:0007669"/>
    <property type="project" value="TreeGrafter"/>
</dbReference>
<dbReference type="GO" id="GO:0005131">
    <property type="term" value="F:growth hormone receptor binding"/>
    <property type="evidence" value="ECO:0007669"/>
    <property type="project" value="InterPro"/>
</dbReference>
<dbReference type="GO" id="GO:0005179">
    <property type="term" value="F:hormone activity"/>
    <property type="evidence" value="ECO:0007669"/>
    <property type="project" value="UniProtKB-KW"/>
</dbReference>
<dbReference type="GO" id="GO:0046872">
    <property type="term" value="F:metal ion binding"/>
    <property type="evidence" value="ECO:0007669"/>
    <property type="project" value="UniProtKB-KW"/>
</dbReference>
<dbReference type="GO" id="GO:0048513">
    <property type="term" value="P:animal organ development"/>
    <property type="evidence" value="ECO:0007669"/>
    <property type="project" value="TreeGrafter"/>
</dbReference>
<dbReference type="GO" id="GO:0060396">
    <property type="term" value="P:growth hormone receptor signaling pathway"/>
    <property type="evidence" value="ECO:0007669"/>
    <property type="project" value="TreeGrafter"/>
</dbReference>
<dbReference type="GO" id="GO:0045927">
    <property type="term" value="P:positive regulation of growth"/>
    <property type="evidence" value="ECO:0007669"/>
    <property type="project" value="TreeGrafter"/>
</dbReference>
<dbReference type="GO" id="GO:0046427">
    <property type="term" value="P:positive regulation of receptor signaling pathway via JAK-STAT"/>
    <property type="evidence" value="ECO:0007669"/>
    <property type="project" value="TreeGrafter"/>
</dbReference>
<dbReference type="GO" id="GO:0031667">
    <property type="term" value="P:response to nutrient levels"/>
    <property type="evidence" value="ECO:0007669"/>
    <property type="project" value="TreeGrafter"/>
</dbReference>
<dbReference type="CDD" id="cd10285">
    <property type="entry name" value="somatotropin_like"/>
    <property type="match status" value="1"/>
</dbReference>
<dbReference type="FunFam" id="1.20.1250.10:FF:000002">
    <property type="entry name" value="Growth hormone"/>
    <property type="match status" value="1"/>
</dbReference>
<dbReference type="Gene3D" id="1.20.1250.10">
    <property type="match status" value="1"/>
</dbReference>
<dbReference type="InterPro" id="IPR009079">
    <property type="entry name" value="4_helix_cytokine-like_core"/>
</dbReference>
<dbReference type="InterPro" id="IPR034975">
    <property type="entry name" value="Somatotropin"/>
</dbReference>
<dbReference type="InterPro" id="IPR001400">
    <property type="entry name" value="Somatotropin/Prolactin"/>
</dbReference>
<dbReference type="InterPro" id="IPR018116">
    <property type="entry name" value="Somatotropin_CS"/>
</dbReference>
<dbReference type="PANTHER" id="PTHR11417:SF2">
    <property type="entry name" value="SOMATOTROPIN"/>
    <property type="match status" value="1"/>
</dbReference>
<dbReference type="PANTHER" id="PTHR11417">
    <property type="entry name" value="SOMATOTROPIN,PROLACTIN"/>
    <property type="match status" value="1"/>
</dbReference>
<dbReference type="Pfam" id="PF00103">
    <property type="entry name" value="Hormone_1"/>
    <property type="match status" value="1"/>
</dbReference>
<dbReference type="PRINTS" id="PR00836">
    <property type="entry name" value="SOMATOTROPIN"/>
</dbReference>
<dbReference type="SUPFAM" id="SSF47266">
    <property type="entry name" value="4-helical cytokines"/>
    <property type="match status" value="1"/>
</dbReference>
<dbReference type="PROSITE" id="PS00266">
    <property type="entry name" value="SOMATOTROPIN_1"/>
    <property type="match status" value="1"/>
</dbReference>
<dbReference type="PROSITE" id="PS00338">
    <property type="entry name" value="SOMATOTROPIN_2"/>
    <property type="match status" value="1"/>
</dbReference>
<feature type="signal peptide" evidence="1">
    <location>
        <begin position="1"/>
        <end position="26"/>
    </location>
</feature>
<feature type="chain" id="PRO_0000032982" description="Somatotropin">
    <location>
        <begin position="27"/>
        <end position="216"/>
    </location>
</feature>
<feature type="binding site" evidence="1">
    <location>
        <position position="45"/>
    </location>
    <ligand>
        <name>Zn(2+)</name>
        <dbReference type="ChEBI" id="CHEBI:29105"/>
    </ligand>
</feature>
<feature type="binding site" evidence="1">
    <location>
        <position position="198"/>
    </location>
    <ligand>
        <name>Zn(2+)</name>
        <dbReference type="ChEBI" id="CHEBI:29105"/>
    </ligand>
</feature>
<feature type="modified residue" description="Phosphoserine" evidence="2">
    <location>
        <position position="131"/>
    </location>
</feature>
<feature type="disulfide bond" evidence="1">
    <location>
        <begin position="78"/>
        <end position="189"/>
    </location>
</feature>
<feature type="disulfide bond" evidence="1">
    <location>
        <begin position="206"/>
        <end position="214"/>
    </location>
</feature>
<evidence type="ECO:0000250" key="1"/>
<evidence type="ECO:0000250" key="2">
    <source>
        <dbReference type="UniProtKB" id="P01241"/>
    </source>
</evidence>
<evidence type="ECO:0000305" key="3"/>
<name>SOMA_DELDE</name>